<sequence>MRELKILVVNNYGQFCHLIHRAVRDLDMDTKIIPNVTPIEDILAEEPDGLILSGGPEMERAGLCFDYVREIDIPILGICLGHQAIALAYGGHVHSGKKGGYAEIEIEVIEEDDILRGLGPKITVWASHADEVAILPEGFIHLARSDICEIEAMRHPTKPIYGVQWHPEVSHTKKGDELLTNFFEVCDRY</sequence>
<proteinExistence type="inferred from homology"/>
<protein>
    <recommendedName>
        <fullName evidence="1">GMP synthase [glutamine-hydrolyzing] subunit A</fullName>
        <ecNumber evidence="1">6.3.5.2</ecNumber>
    </recommendedName>
    <alternativeName>
        <fullName evidence="1">Glutamine amidotransferase</fullName>
    </alternativeName>
</protein>
<evidence type="ECO:0000255" key="1">
    <source>
        <dbReference type="HAMAP-Rule" id="MF_01510"/>
    </source>
</evidence>
<keyword id="KW-0067">ATP-binding</keyword>
<keyword id="KW-0315">Glutamine amidotransferase</keyword>
<keyword id="KW-0332">GMP biosynthesis</keyword>
<keyword id="KW-0436">Ligase</keyword>
<keyword id="KW-0547">Nucleotide-binding</keyword>
<keyword id="KW-0658">Purine biosynthesis</keyword>
<keyword id="KW-1185">Reference proteome</keyword>
<dbReference type="EC" id="6.3.5.2" evidence="1"/>
<dbReference type="EMBL" id="AE010299">
    <property type="protein sequence ID" value="AAM07929.1"/>
    <property type="molecule type" value="Genomic_DNA"/>
</dbReference>
<dbReference type="RefSeq" id="WP_011024463.1">
    <property type="nucleotide sequence ID" value="NC_003552.1"/>
</dbReference>
<dbReference type="SMR" id="Q8THC7"/>
<dbReference type="FunCoup" id="Q8THC7">
    <property type="interactions" value="25"/>
</dbReference>
<dbReference type="STRING" id="188937.MA_4590"/>
<dbReference type="MEROPS" id="C26.A31"/>
<dbReference type="EnsemblBacteria" id="AAM07929">
    <property type="protein sequence ID" value="AAM07929"/>
    <property type="gene ID" value="MA_4590"/>
</dbReference>
<dbReference type="GeneID" id="1476484"/>
<dbReference type="KEGG" id="mac:MA_4590"/>
<dbReference type="HOGENOM" id="CLU_014340_1_4_2"/>
<dbReference type="InParanoid" id="Q8THC7"/>
<dbReference type="OrthoDB" id="10772at2157"/>
<dbReference type="PhylomeDB" id="Q8THC7"/>
<dbReference type="UniPathway" id="UPA00189">
    <property type="reaction ID" value="UER00296"/>
</dbReference>
<dbReference type="Proteomes" id="UP000002487">
    <property type="component" value="Chromosome"/>
</dbReference>
<dbReference type="GO" id="GO:0005524">
    <property type="term" value="F:ATP binding"/>
    <property type="evidence" value="ECO:0007669"/>
    <property type="project" value="UniProtKB-KW"/>
</dbReference>
<dbReference type="GO" id="GO:0003922">
    <property type="term" value="F:GMP synthase (glutamine-hydrolyzing) activity"/>
    <property type="evidence" value="ECO:0007669"/>
    <property type="project" value="UniProtKB-UniRule"/>
</dbReference>
<dbReference type="CDD" id="cd01742">
    <property type="entry name" value="GATase1_GMP_Synthase"/>
    <property type="match status" value="1"/>
</dbReference>
<dbReference type="FunFam" id="3.40.50.880:FF:000047">
    <property type="entry name" value="GMP synthase [glutamine-hydrolyzing] subunit A"/>
    <property type="match status" value="1"/>
</dbReference>
<dbReference type="Gene3D" id="3.40.50.880">
    <property type="match status" value="1"/>
</dbReference>
<dbReference type="HAMAP" id="MF_01510">
    <property type="entry name" value="GMP_synthase_A"/>
    <property type="match status" value="1"/>
</dbReference>
<dbReference type="InterPro" id="IPR029062">
    <property type="entry name" value="Class_I_gatase-like"/>
</dbReference>
<dbReference type="InterPro" id="IPR017926">
    <property type="entry name" value="GATASE"/>
</dbReference>
<dbReference type="InterPro" id="IPR004739">
    <property type="entry name" value="GMP_synth_GATase"/>
</dbReference>
<dbReference type="InterPro" id="IPR023686">
    <property type="entry name" value="GMP_synthase_A"/>
</dbReference>
<dbReference type="NCBIfam" id="TIGR00888">
    <property type="entry name" value="guaA_Nterm"/>
    <property type="match status" value="1"/>
</dbReference>
<dbReference type="NCBIfam" id="NF001975">
    <property type="entry name" value="PRK00758.1"/>
    <property type="match status" value="1"/>
</dbReference>
<dbReference type="PANTHER" id="PTHR11922:SF2">
    <property type="entry name" value="GMP SYNTHASE [GLUTAMINE-HYDROLYZING]"/>
    <property type="match status" value="1"/>
</dbReference>
<dbReference type="PANTHER" id="PTHR11922">
    <property type="entry name" value="GMP SYNTHASE-RELATED"/>
    <property type="match status" value="1"/>
</dbReference>
<dbReference type="Pfam" id="PF00117">
    <property type="entry name" value="GATase"/>
    <property type="match status" value="1"/>
</dbReference>
<dbReference type="PRINTS" id="PR00097">
    <property type="entry name" value="ANTSNTHASEII"/>
</dbReference>
<dbReference type="PRINTS" id="PR00096">
    <property type="entry name" value="GATASE"/>
</dbReference>
<dbReference type="SUPFAM" id="SSF52317">
    <property type="entry name" value="Class I glutamine amidotransferase-like"/>
    <property type="match status" value="1"/>
</dbReference>
<dbReference type="PROSITE" id="PS51273">
    <property type="entry name" value="GATASE_TYPE_1"/>
    <property type="match status" value="1"/>
</dbReference>
<accession>Q8THC7</accession>
<name>GUAAA_METAC</name>
<feature type="chain" id="PRO_0000140220" description="GMP synthase [glutamine-hydrolyzing] subunit A">
    <location>
        <begin position="1"/>
        <end position="189"/>
    </location>
</feature>
<feature type="domain" description="Glutamine amidotransferase type-1" evidence="1">
    <location>
        <begin position="5"/>
        <end position="189"/>
    </location>
</feature>
<feature type="active site" description="Nucleophile" evidence="1">
    <location>
        <position position="79"/>
    </location>
</feature>
<feature type="active site" evidence="1">
    <location>
        <position position="166"/>
    </location>
</feature>
<feature type="active site" evidence="1">
    <location>
        <position position="168"/>
    </location>
</feature>
<comment type="function">
    <text evidence="1">Catalyzes the synthesis of GMP from XMP.</text>
</comment>
<comment type="catalytic activity">
    <reaction evidence="1">
        <text>XMP + L-glutamine + ATP + H2O = GMP + L-glutamate + AMP + diphosphate + 2 H(+)</text>
        <dbReference type="Rhea" id="RHEA:11680"/>
        <dbReference type="ChEBI" id="CHEBI:15377"/>
        <dbReference type="ChEBI" id="CHEBI:15378"/>
        <dbReference type="ChEBI" id="CHEBI:29985"/>
        <dbReference type="ChEBI" id="CHEBI:30616"/>
        <dbReference type="ChEBI" id="CHEBI:33019"/>
        <dbReference type="ChEBI" id="CHEBI:57464"/>
        <dbReference type="ChEBI" id="CHEBI:58115"/>
        <dbReference type="ChEBI" id="CHEBI:58359"/>
        <dbReference type="ChEBI" id="CHEBI:456215"/>
        <dbReference type="EC" id="6.3.5.2"/>
    </reaction>
</comment>
<comment type="pathway">
    <text evidence="1">Purine metabolism; GMP biosynthesis; GMP from XMP (L-Gln route): step 1/1.</text>
</comment>
<comment type="subunit">
    <text evidence="1">Heterodimer composed of a glutamine amidotransferase subunit (A) and a GMP-binding subunit (B).</text>
</comment>
<gene>
    <name evidence="1" type="primary">guaAA</name>
    <name type="synonym">guaA</name>
    <name type="ordered locus">MA_4590</name>
</gene>
<reference key="1">
    <citation type="journal article" date="2002" name="Genome Res.">
        <title>The genome of Methanosarcina acetivorans reveals extensive metabolic and physiological diversity.</title>
        <authorList>
            <person name="Galagan J.E."/>
            <person name="Nusbaum C."/>
            <person name="Roy A."/>
            <person name="Endrizzi M.G."/>
            <person name="Macdonald P."/>
            <person name="FitzHugh W."/>
            <person name="Calvo S."/>
            <person name="Engels R."/>
            <person name="Smirnov S."/>
            <person name="Atnoor D."/>
            <person name="Brown A."/>
            <person name="Allen N."/>
            <person name="Naylor J."/>
            <person name="Stange-Thomann N."/>
            <person name="DeArellano K."/>
            <person name="Johnson R."/>
            <person name="Linton L."/>
            <person name="McEwan P."/>
            <person name="McKernan K."/>
            <person name="Talamas J."/>
            <person name="Tirrell A."/>
            <person name="Ye W."/>
            <person name="Zimmer A."/>
            <person name="Barber R.D."/>
            <person name="Cann I."/>
            <person name="Graham D.E."/>
            <person name="Grahame D.A."/>
            <person name="Guss A.M."/>
            <person name="Hedderich R."/>
            <person name="Ingram-Smith C."/>
            <person name="Kuettner H.C."/>
            <person name="Krzycki J.A."/>
            <person name="Leigh J.A."/>
            <person name="Li W."/>
            <person name="Liu J."/>
            <person name="Mukhopadhyay B."/>
            <person name="Reeve J.N."/>
            <person name="Smith K."/>
            <person name="Springer T.A."/>
            <person name="Umayam L.A."/>
            <person name="White O."/>
            <person name="White R.H."/>
            <person name="de Macario E.C."/>
            <person name="Ferry J.G."/>
            <person name="Jarrell K.F."/>
            <person name="Jing H."/>
            <person name="Macario A.J.L."/>
            <person name="Paulsen I.T."/>
            <person name="Pritchett M."/>
            <person name="Sowers K.R."/>
            <person name="Swanson R.V."/>
            <person name="Zinder S.H."/>
            <person name="Lander E."/>
            <person name="Metcalf W.W."/>
            <person name="Birren B."/>
        </authorList>
    </citation>
    <scope>NUCLEOTIDE SEQUENCE [LARGE SCALE GENOMIC DNA]</scope>
    <source>
        <strain>ATCC 35395 / DSM 2834 / JCM 12185 / C2A</strain>
    </source>
</reference>
<organism>
    <name type="scientific">Methanosarcina acetivorans (strain ATCC 35395 / DSM 2834 / JCM 12185 / C2A)</name>
    <dbReference type="NCBI Taxonomy" id="188937"/>
    <lineage>
        <taxon>Archaea</taxon>
        <taxon>Methanobacteriati</taxon>
        <taxon>Methanobacteriota</taxon>
        <taxon>Stenosarchaea group</taxon>
        <taxon>Methanomicrobia</taxon>
        <taxon>Methanosarcinales</taxon>
        <taxon>Methanosarcinaceae</taxon>
        <taxon>Methanosarcina</taxon>
    </lineage>
</organism>